<feature type="chain" id="PRO_0000356949" description="Peroxynitrite isomerase">
    <location>
        <begin position="1"/>
        <end position="196"/>
    </location>
</feature>
<feature type="region of interest" description="Disordered" evidence="2">
    <location>
        <begin position="1"/>
        <end position="29"/>
    </location>
</feature>
<feature type="short sequence motif" description="GXWXGXG" evidence="1">
    <location>
        <begin position="46"/>
        <end position="52"/>
    </location>
</feature>
<feature type="compositionally biased region" description="Pro residues" evidence="2">
    <location>
        <begin position="7"/>
        <end position="19"/>
    </location>
</feature>
<feature type="binding site" description="axial binding residue" evidence="1">
    <location>
        <position position="186"/>
    </location>
    <ligand>
        <name>heme b</name>
        <dbReference type="ChEBI" id="CHEBI:60344"/>
    </ligand>
    <ligandPart>
        <name>Fe</name>
        <dbReference type="ChEBI" id="CHEBI:18248"/>
    </ligandPart>
</feature>
<dbReference type="EC" id="5.99.-.-" evidence="1"/>
<dbReference type="EMBL" id="CP000850">
    <property type="protein sequence ID" value="ABV96302.1"/>
    <property type="molecule type" value="Genomic_DNA"/>
</dbReference>
<dbReference type="SMR" id="A8LZD6"/>
<dbReference type="STRING" id="391037.Sare_0373"/>
<dbReference type="KEGG" id="saq:Sare_0373"/>
<dbReference type="PATRIC" id="fig|391037.6.peg.380"/>
<dbReference type="eggNOG" id="COG4044">
    <property type="taxonomic scope" value="Bacteria"/>
</dbReference>
<dbReference type="HOGENOM" id="CLU_085483_0_0_11"/>
<dbReference type="OrthoDB" id="4804006at2"/>
<dbReference type="GO" id="GO:0020037">
    <property type="term" value="F:heme binding"/>
    <property type="evidence" value="ECO:0007669"/>
    <property type="project" value="UniProtKB-UniRule"/>
</dbReference>
<dbReference type="GO" id="GO:0046872">
    <property type="term" value="F:metal ion binding"/>
    <property type="evidence" value="ECO:0007669"/>
    <property type="project" value="UniProtKB-KW"/>
</dbReference>
<dbReference type="GO" id="GO:0062213">
    <property type="term" value="F:peroxynitrite isomerase activity"/>
    <property type="evidence" value="ECO:0007669"/>
    <property type="project" value="UniProtKB-UniRule"/>
</dbReference>
<dbReference type="CDD" id="cd07828">
    <property type="entry name" value="lipocalin_heme-bd-THAP4-like"/>
    <property type="match status" value="1"/>
</dbReference>
<dbReference type="Gene3D" id="2.40.128.20">
    <property type="match status" value="1"/>
</dbReference>
<dbReference type="HAMAP" id="MF_01297">
    <property type="entry name" value="nitrobindin"/>
    <property type="match status" value="1"/>
</dbReference>
<dbReference type="InterPro" id="IPR012674">
    <property type="entry name" value="Calycin"/>
</dbReference>
<dbReference type="InterPro" id="IPR022939">
    <property type="entry name" value="Nb(III)_bact/plant"/>
</dbReference>
<dbReference type="InterPro" id="IPR045165">
    <property type="entry name" value="Nitrobindin"/>
</dbReference>
<dbReference type="InterPro" id="IPR014878">
    <property type="entry name" value="THAP4-like_heme-bd"/>
</dbReference>
<dbReference type="PANTHER" id="PTHR15854:SF4">
    <property type="entry name" value="PEROXYNITRITE ISOMERASE THAP4"/>
    <property type="match status" value="1"/>
</dbReference>
<dbReference type="PANTHER" id="PTHR15854">
    <property type="entry name" value="THAP4 PROTEIN"/>
    <property type="match status" value="1"/>
</dbReference>
<dbReference type="Pfam" id="PF08768">
    <property type="entry name" value="THAP4_heme-bd"/>
    <property type="match status" value="1"/>
</dbReference>
<dbReference type="SUPFAM" id="SSF50814">
    <property type="entry name" value="Lipocalins"/>
    <property type="match status" value="1"/>
</dbReference>
<proteinExistence type="inferred from homology"/>
<gene>
    <name type="ordered locus">Sare_0373</name>
</gene>
<sequence>MSDENPLQPPWLNAPPVDPYPYEESHDLRTGPKLHPALDGLLPYVGVWRGRGRGGYPTIEDFDYGQEIRISHDGRPFLCYESRAWLLDEQSRPIRPAGREMGWWRPVLAGDRATGEWEALMTTPTGVMELHLGKRTGTQLEFATDAVVRTPTAKEVTAGHRLFGIVEGALLYAQEMAAVGHGLTPHLSARLIRVGG</sequence>
<evidence type="ECO:0000255" key="1">
    <source>
        <dbReference type="HAMAP-Rule" id="MF_01297"/>
    </source>
</evidence>
<evidence type="ECO:0000256" key="2">
    <source>
        <dbReference type="SAM" id="MobiDB-lite"/>
    </source>
</evidence>
<protein>
    <recommendedName>
        <fullName>Peroxynitrite isomerase</fullName>
        <ecNumber evidence="1">5.99.-.-</ecNumber>
    </recommendedName>
    <alternativeName>
        <fullName>Ferric nitrobindin</fullName>
        <shortName>Nb(III)</shortName>
    </alternativeName>
</protein>
<comment type="function">
    <text evidence="1">Heme-binding protein able to scavenge peroxynitrite and to protect free L-tyrosine against peroxynitrite-mediated nitration, by acting as a peroxynitrite isomerase that converts peroxynitrite to nitrate. Therefore, this protein likely plays a role in peroxynitrite sensing and in the detoxification of reactive nitrogen and oxygen species (RNS and ROS, respectively). Is able to bind nitric oxide (NO) in vitro, but may act as a sensor of peroxynitrite levels in vivo.</text>
</comment>
<comment type="catalytic activity">
    <reaction evidence="1">
        <text>peroxynitrite = nitrate</text>
        <dbReference type="Rhea" id="RHEA:63116"/>
        <dbReference type="ChEBI" id="CHEBI:17632"/>
        <dbReference type="ChEBI" id="CHEBI:25941"/>
    </reaction>
    <physiologicalReaction direction="left-to-right" evidence="1">
        <dbReference type="Rhea" id="RHEA:63117"/>
    </physiologicalReaction>
</comment>
<comment type="cofactor">
    <cofactor evidence="1">
        <name>heme b</name>
        <dbReference type="ChEBI" id="CHEBI:60344"/>
    </cofactor>
    <text evidence="1">Binds 1 heme b group per subunit, that coordinates a highly solvent-exposed Fe(III) atom.</text>
</comment>
<comment type="pathway">
    <text evidence="1">Nitrogen metabolism.</text>
</comment>
<comment type="subunit">
    <text evidence="1">Homodimer.</text>
</comment>
<comment type="domain">
    <text evidence="1">Forms a 10-stranded antiparallel beta-barrel structure able to accommodate a hydrophobic ligand in its interior. In fact, this fold hosts the heme group, which is located in a wide surface cleft.</text>
</comment>
<comment type="similarity">
    <text evidence="1">Belongs to the nitrobindin family.</text>
</comment>
<organism>
    <name type="scientific">Salinispora arenicola (strain CNS-205)</name>
    <dbReference type="NCBI Taxonomy" id="391037"/>
    <lineage>
        <taxon>Bacteria</taxon>
        <taxon>Bacillati</taxon>
        <taxon>Actinomycetota</taxon>
        <taxon>Actinomycetes</taxon>
        <taxon>Micromonosporales</taxon>
        <taxon>Micromonosporaceae</taxon>
        <taxon>Salinispora</taxon>
    </lineage>
</organism>
<name>NB_SALAI</name>
<accession>A8LZD6</accession>
<keyword id="KW-0349">Heme</keyword>
<keyword id="KW-0408">Iron</keyword>
<keyword id="KW-0413">Isomerase</keyword>
<keyword id="KW-0479">Metal-binding</keyword>
<reference key="1">
    <citation type="submission" date="2007-10" db="EMBL/GenBank/DDBJ databases">
        <title>Complete sequence of Salinispora arenicola CNS-205.</title>
        <authorList>
            <consortium name="US DOE Joint Genome Institute"/>
            <person name="Copeland A."/>
            <person name="Lucas S."/>
            <person name="Lapidus A."/>
            <person name="Barry K."/>
            <person name="Glavina del Rio T."/>
            <person name="Dalin E."/>
            <person name="Tice H."/>
            <person name="Pitluck S."/>
            <person name="Foster B."/>
            <person name="Schmutz J."/>
            <person name="Larimer F."/>
            <person name="Land M."/>
            <person name="Hauser L."/>
            <person name="Kyrpides N."/>
            <person name="Ivanova N."/>
            <person name="Jensen P.R."/>
            <person name="Moore B.S."/>
            <person name="Penn K."/>
            <person name="Jenkins C."/>
            <person name="Udwary D."/>
            <person name="Xiang L."/>
            <person name="Gontang E."/>
            <person name="Richardson P."/>
        </authorList>
    </citation>
    <scope>NUCLEOTIDE SEQUENCE [LARGE SCALE GENOMIC DNA]</scope>
    <source>
        <strain>CNS-205</strain>
    </source>
</reference>